<dbReference type="EC" id="1.7.1.7" evidence="1"/>
<dbReference type="EMBL" id="FM204884">
    <property type="protein sequence ID" value="CAW99190.1"/>
    <property type="molecule type" value="Genomic_DNA"/>
</dbReference>
<dbReference type="SMR" id="C0MF02"/>
<dbReference type="KEGG" id="seq:SZO_09290"/>
<dbReference type="eggNOG" id="COG0516">
    <property type="taxonomic scope" value="Bacteria"/>
</dbReference>
<dbReference type="HOGENOM" id="CLU_022552_5_0_9"/>
<dbReference type="Proteomes" id="UP000001368">
    <property type="component" value="Chromosome"/>
</dbReference>
<dbReference type="GO" id="GO:0005829">
    <property type="term" value="C:cytosol"/>
    <property type="evidence" value="ECO:0007669"/>
    <property type="project" value="TreeGrafter"/>
</dbReference>
<dbReference type="GO" id="GO:1902560">
    <property type="term" value="C:GMP reductase complex"/>
    <property type="evidence" value="ECO:0007669"/>
    <property type="project" value="InterPro"/>
</dbReference>
<dbReference type="GO" id="GO:0003920">
    <property type="term" value="F:GMP reductase activity"/>
    <property type="evidence" value="ECO:0007669"/>
    <property type="project" value="UniProtKB-UniRule"/>
</dbReference>
<dbReference type="GO" id="GO:0006163">
    <property type="term" value="P:purine nucleotide metabolic process"/>
    <property type="evidence" value="ECO:0007669"/>
    <property type="project" value="UniProtKB-UniRule"/>
</dbReference>
<dbReference type="CDD" id="cd00381">
    <property type="entry name" value="IMPDH"/>
    <property type="match status" value="1"/>
</dbReference>
<dbReference type="FunFam" id="3.20.20.70:FF:000424">
    <property type="entry name" value="Inosine-5'-monophosphate dehydrogenase 2"/>
    <property type="match status" value="1"/>
</dbReference>
<dbReference type="Gene3D" id="3.20.20.70">
    <property type="entry name" value="Aldolase class I"/>
    <property type="match status" value="1"/>
</dbReference>
<dbReference type="HAMAP" id="MF_01511">
    <property type="entry name" value="GMP_reduct_type2"/>
    <property type="match status" value="1"/>
</dbReference>
<dbReference type="InterPro" id="IPR013785">
    <property type="entry name" value="Aldolase_TIM"/>
</dbReference>
<dbReference type="InterPro" id="IPR050139">
    <property type="entry name" value="GMP_reductase"/>
</dbReference>
<dbReference type="InterPro" id="IPR005994">
    <property type="entry name" value="GuaC_type_2"/>
</dbReference>
<dbReference type="InterPro" id="IPR015875">
    <property type="entry name" value="IMP_DH/GMP_Rdtase_CS"/>
</dbReference>
<dbReference type="InterPro" id="IPR001093">
    <property type="entry name" value="IMP_DH_GMPRt"/>
</dbReference>
<dbReference type="NCBIfam" id="TIGR01306">
    <property type="entry name" value="GMP_reduct_2"/>
    <property type="match status" value="1"/>
</dbReference>
<dbReference type="NCBIfam" id="NF003966">
    <property type="entry name" value="PRK05458.1"/>
    <property type="match status" value="1"/>
</dbReference>
<dbReference type="PANTHER" id="PTHR43170">
    <property type="entry name" value="GMP REDUCTASE"/>
    <property type="match status" value="1"/>
</dbReference>
<dbReference type="PANTHER" id="PTHR43170:SF5">
    <property type="entry name" value="GMP REDUCTASE"/>
    <property type="match status" value="1"/>
</dbReference>
<dbReference type="Pfam" id="PF00478">
    <property type="entry name" value="IMPDH"/>
    <property type="match status" value="1"/>
</dbReference>
<dbReference type="PIRSF" id="PIRSF036500">
    <property type="entry name" value="GMP_red_Firmic"/>
    <property type="match status" value="1"/>
</dbReference>
<dbReference type="SMART" id="SM01240">
    <property type="entry name" value="IMPDH"/>
    <property type="match status" value="1"/>
</dbReference>
<dbReference type="SUPFAM" id="SSF51412">
    <property type="entry name" value="Inosine monophosphate dehydrogenase (IMPDH)"/>
    <property type="match status" value="1"/>
</dbReference>
<dbReference type="PROSITE" id="PS00487">
    <property type="entry name" value="IMP_DH_GMP_RED"/>
    <property type="match status" value="1"/>
</dbReference>
<accession>C0MF02</accession>
<feature type="chain" id="PRO_1000215346" description="GMP reductase">
    <location>
        <begin position="1"/>
        <end position="327"/>
    </location>
</feature>
<feature type="active site" description="Thioimidate intermediate" evidence="1">
    <location>
        <position position="176"/>
    </location>
</feature>
<feature type="binding site" evidence="1">
    <location>
        <begin position="205"/>
        <end position="228"/>
    </location>
    <ligand>
        <name>NADP(+)</name>
        <dbReference type="ChEBI" id="CHEBI:58349"/>
    </ligand>
</feature>
<sequence length="327" mass="36190">MFNDMPVFDYEDIQLIPNKCIINSRSEADTSVRLGNYTFKLPVIPANMQTIIDETIAEQLARDGYFYIMHRFDEQGRKPFIQRMHEQQLIASISVGVKDYEYDFVSSLKEDAPEFITIDIAHGHADSVIKMIKHIKAELPETFVIAGNVGTPEAVRELENAGADATKVGIGPGKVCITKVKTGFGTGGWQLAAVRWCAKAARKPIIADGGIRTHGDIAKSIRFGATMVMIGSLFAGHIESPGKMVEIDGQSFKEYYGSASEYQKGEHKNVEGKKILLPTKGHLADTLTEMKQDLQSSISYAGGRELESLRRVNYVIVKNSIWNGDSI</sequence>
<keyword id="KW-0521">NADP</keyword>
<keyword id="KW-0560">Oxidoreductase</keyword>
<evidence type="ECO:0000255" key="1">
    <source>
        <dbReference type="HAMAP-Rule" id="MF_01511"/>
    </source>
</evidence>
<reference key="1">
    <citation type="journal article" date="2009" name="PLoS Pathog.">
        <title>Genomic evidence for the evolution of Streptococcus equi: host restriction, increased virulence, and genetic exchange with human pathogens.</title>
        <authorList>
            <person name="Holden M.T.G."/>
            <person name="Heather Z."/>
            <person name="Paillot R."/>
            <person name="Steward K.F."/>
            <person name="Webb K."/>
            <person name="Ainslie F."/>
            <person name="Jourdan T."/>
            <person name="Bason N.C."/>
            <person name="Holroyd N.E."/>
            <person name="Mungall K."/>
            <person name="Quail M.A."/>
            <person name="Sanders M."/>
            <person name="Simmonds M."/>
            <person name="Willey D."/>
            <person name="Brooks K."/>
            <person name="Aanensen D.M."/>
            <person name="Spratt B.G."/>
            <person name="Jolley K.A."/>
            <person name="Maiden M.C.J."/>
            <person name="Kehoe M."/>
            <person name="Chanter N."/>
            <person name="Bentley S.D."/>
            <person name="Robinson C."/>
            <person name="Maskell D.J."/>
            <person name="Parkhill J."/>
            <person name="Waller A.S."/>
        </authorList>
    </citation>
    <scope>NUCLEOTIDE SEQUENCE [LARGE SCALE GENOMIC DNA]</scope>
    <source>
        <strain>H70</strain>
    </source>
</reference>
<protein>
    <recommendedName>
        <fullName evidence="1">GMP reductase</fullName>
        <ecNumber evidence="1">1.7.1.7</ecNumber>
    </recommendedName>
    <alternativeName>
        <fullName evidence="1">Guanosine 5'-monophosphate oxidoreductase</fullName>
        <shortName evidence="1">Guanosine monophosphate reductase</shortName>
    </alternativeName>
</protein>
<organism>
    <name type="scientific">Streptococcus equi subsp. zooepidemicus (strain H70)</name>
    <dbReference type="NCBI Taxonomy" id="553483"/>
    <lineage>
        <taxon>Bacteria</taxon>
        <taxon>Bacillati</taxon>
        <taxon>Bacillota</taxon>
        <taxon>Bacilli</taxon>
        <taxon>Lactobacillales</taxon>
        <taxon>Streptococcaceae</taxon>
        <taxon>Streptococcus</taxon>
    </lineage>
</organism>
<comment type="function">
    <text evidence="1">Catalyzes the irreversible NADPH-dependent deamination of GMP to IMP. It functions in the conversion of nucleobase, nucleoside and nucleotide derivatives of G to A nucleotides, and in maintaining the intracellular balance of A and G nucleotides.</text>
</comment>
<comment type="catalytic activity">
    <reaction evidence="1">
        <text>IMP + NH4(+) + NADP(+) = GMP + NADPH + 2 H(+)</text>
        <dbReference type="Rhea" id="RHEA:17185"/>
        <dbReference type="ChEBI" id="CHEBI:15378"/>
        <dbReference type="ChEBI" id="CHEBI:28938"/>
        <dbReference type="ChEBI" id="CHEBI:57783"/>
        <dbReference type="ChEBI" id="CHEBI:58053"/>
        <dbReference type="ChEBI" id="CHEBI:58115"/>
        <dbReference type="ChEBI" id="CHEBI:58349"/>
        <dbReference type="EC" id="1.7.1.7"/>
    </reaction>
</comment>
<comment type="similarity">
    <text evidence="1">Belongs to the IMPDH/GMPR family. GuaC type 2 subfamily.</text>
</comment>
<gene>
    <name evidence="1" type="primary">guaC</name>
    <name type="ordered locus">SZO_09290</name>
</gene>
<name>GUAC_STRS7</name>
<proteinExistence type="inferred from homology"/>